<evidence type="ECO:0000255" key="1">
    <source>
        <dbReference type="HAMAP-Rule" id="MF_00182"/>
    </source>
</evidence>
<protein>
    <recommendedName>
        <fullName evidence="1">Methionyl-tRNA formyltransferase</fullName>
        <ecNumber evidence="1">2.1.2.9</ecNumber>
    </recommendedName>
</protein>
<proteinExistence type="inferred from homology"/>
<accession>Q8UID0</accession>
<name>FMT_AGRFC</name>
<keyword id="KW-0648">Protein biosynthesis</keyword>
<keyword id="KW-1185">Reference proteome</keyword>
<keyword id="KW-0808">Transferase</keyword>
<organism>
    <name type="scientific">Agrobacterium fabrum (strain C58 / ATCC 33970)</name>
    <name type="common">Agrobacterium tumefaciens (strain C58)</name>
    <dbReference type="NCBI Taxonomy" id="176299"/>
    <lineage>
        <taxon>Bacteria</taxon>
        <taxon>Pseudomonadati</taxon>
        <taxon>Pseudomonadota</taxon>
        <taxon>Alphaproteobacteria</taxon>
        <taxon>Hyphomicrobiales</taxon>
        <taxon>Rhizobiaceae</taxon>
        <taxon>Rhizobium/Agrobacterium group</taxon>
        <taxon>Agrobacterium</taxon>
        <taxon>Agrobacterium tumefaciens complex</taxon>
    </lineage>
</organism>
<sequence>MSLRIIFMGTPDFSVPTLRALVEAGHEIVAVYTQPPRPGGRRGLDLQKSPVHQVAELLGLPVLTPVNFKAEEDRQQFRDFNADVAVVVAYGLLLPEAILSGTRLGCYNGHASLLPRWRGAAPIQRAIMAGDAETGMMVMKMEKGLDTGPVALTAKVAIDENMTAGELHDSLMLAGARLMRQAMAKLEADDLPLVTQAEEGVLYAAKIDKGETRIDFSRPAQDVHNHIRGLSPFPGAWLEMDIGGKPERVKVLASELASGMGEAGSALDDALTIACGSDAVRLTRLQKAGGKPMSAADFVRGTPVPATTRLG</sequence>
<dbReference type="EC" id="2.1.2.9" evidence="1"/>
<dbReference type="EMBL" id="AE007869">
    <property type="protein sequence ID" value="AAK86184.1"/>
    <property type="molecule type" value="Genomic_DNA"/>
</dbReference>
<dbReference type="PIR" id="AG2621">
    <property type="entry name" value="AG2621"/>
</dbReference>
<dbReference type="PIR" id="G97403">
    <property type="entry name" value="G97403"/>
</dbReference>
<dbReference type="RefSeq" id="NP_353399.1">
    <property type="nucleotide sequence ID" value="NC_003062.2"/>
</dbReference>
<dbReference type="RefSeq" id="WP_006310212.1">
    <property type="nucleotide sequence ID" value="NC_003062.2"/>
</dbReference>
<dbReference type="SMR" id="Q8UID0"/>
<dbReference type="STRING" id="176299.Atu0367"/>
<dbReference type="EnsemblBacteria" id="AAK86184">
    <property type="protein sequence ID" value="AAK86184"/>
    <property type="gene ID" value="Atu0367"/>
</dbReference>
<dbReference type="GeneID" id="1132405"/>
<dbReference type="KEGG" id="atu:Atu0367"/>
<dbReference type="PATRIC" id="fig|176299.10.peg.358"/>
<dbReference type="eggNOG" id="COG0223">
    <property type="taxonomic scope" value="Bacteria"/>
</dbReference>
<dbReference type="HOGENOM" id="CLU_033347_1_2_5"/>
<dbReference type="OrthoDB" id="9802815at2"/>
<dbReference type="PhylomeDB" id="Q8UID0"/>
<dbReference type="BioCyc" id="AGRO:ATU0367-MONOMER"/>
<dbReference type="Proteomes" id="UP000000813">
    <property type="component" value="Chromosome circular"/>
</dbReference>
<dbReference type="GO" id="GO:0005829">
    <property type="term" value="C:cytosol"/>
    <property type="evidence" value="ECO:0007669"/>
    <property type="project" value="TreeGrafter"/>
</dbReference>
<dbReference type="GO" id="GO:0004479">
    <property type="term" value="F:methionyl-tRNA formyltransferase activity"/>
    <property type="evidence" value="ECO:0007669"/>
    <property type="project" value="UniProtKB-UniRule"/>
</dbReference>
<dbReference type="CDD" id="cd08646">
    <property type="entry name" value="FMT_core_Met-tRNA-FMT_N"/>
    <property type="match status" value="1"/>
</dbReference>
<dbReference type="CDD" id="cd08704">
    <property type="entry name" value="Met_tRNA_FMT_C"/>
    <property type="match status" value="1"/>
</dbReference>
<dbReference type="Gene3D" id="3.40.50.12230">
    <property type="match status" value="1"/>
</dbReference>
<dbReference type="HAMAP" id="MF_00182">
    <property type="entry name" value="Formyl_trans"/>
    <property type="match status" value="1"/>
</dbReference>
<dbReference type="InterPro" id="IPR005794">
    <property type="entry name" value="Fmt"/>
</dbReference>
<dbReference type="InterPro" id="IPR005793">
    <property type="entry name" value="Formyl_trans_C"/>
</dbReference>
<dbReference type="InterPro" id="IPR002376">
    <property type="entry name" value="Formyl_transf_N"/>
</dbReference>
<dbReference type="InterPro" id="IPR036477">
    <property type="entry name" value="Formyl_transf_N_sf"/>
</dbReference>
<dbReference type="InterPro" id="IPR011034">
    <property type="entry name" value="Formyl_transferase-like_C_sf"/>
</dbReference>
<dbReference type="InterPro" id="IPR001555">
    <property type="entry name" value="GART_AS"/>
</dbReference>
<dbReference type="InterPro" id="IPR044135">
    <property type="entry name" value="Met-tRNA-FMT_C"/>
</dbReference>
<dbReference type="InterPro" id="IPR041711">
    <property type="entry name" value="Met-tRNA-FMT_N"/>
</dbReference>
<dbReference type="NCBIfam" id="TIGR00460">
    <property type="entry name" value="fmt"/>
    <property type="match status" value="1"/>
</dbReference>
<dbReference type="PANTHER" id="PTHR11138">
    <property type="entry name" value="METHIONYL-TRNA FORMYLTRANSFERASE"/>
    <property type="match status" value="1"/>
</dbReference>
<dbReference type="PANTHER" id="PTHR11138:SF5">
    <property type="entry name" value="METHIONYL-TRNA FORMYLTRANSFERASE, MITOCHONDRIAL"/>
    <property type="match status" value="1"/>
</dbReference>
<dbReference type="Pfam" id="PF02911">
    <property type="entry name" value="Formyl_trans_C"/>
    <property type="match status" value="1"/>
</dbReference>
<dbReference type="Pfam" id="PF00551">
    <property type="entry name" value="Formyl_trans_N"/>
    <property type="match status" value="1"/>
</dbReference>
<dbReference type="SUPFAM" id="SSF50486">
    <property type="entry name" value="FMT C-terminal domain-like"/>
    <property type="match status" value="1"/>
</dbReference>
<dbReference type="SUPFAM" id="SSF53328">
    <property type="entry name" value="Formyltransferase"/>
    <property type="match status" value="1"/>
</dbReference>
<dbReference type="PROSITE" id="PS00373">
    <property type="entry name" value="GART"/>
    <property type="match status" value="1"/>
</dbReference>
<reference key="1">
    <citation type="journal article" date="2001" name="Science">
        <title>The genome of the natural genetic engineer Agrobacterium tumefaciens C58.</title>
        <authorList>
            <person name="Wood D.W."/>
            <person name="Setubal J.C."/>
            <person name="Kaul R."/>
            <person name="Monks D.E."/>
            <person name="Kitajima J.P."/>
            <person name="Okura V.K."/>
            <person name="Zhou Y."/>
            <person name="Chen L."/>
            <person name="Wood G.E."/>
            <person name="Almeida N.F. Jr."/>
            <person name="Woo L."/>
            <person name="Chen Y."/>
            <person name="Paulsen I.T."/>
            <person name="Eisen J.A."/>
            <person name="Karp P.D."/>
            <person name="Bovee D. Sr."/>
            <person name="Chapman P."/>
            <person name="Clendenning J."/>
            <person name="Deatherage G."/>
            <person name="Gillet W."/>
            <person name="Grant C."/>
            <person name="Kutyavin T."/>
            <person name="Levy R."/>
            <person name="Li M.-J."/>
            <person name="McClelland E."/>
            <person name="Palmieri A."/>
            <person name="Raymond C."/>
            <person name="Rouse G."/>
            <person name="Saenphimmachak C."/>
            <person name="Wu Z."/>
            <person name="Romero P."/>
            <person name="Gordon D."/>
            <person name="Zhang S."/>
            <person name="Yoo H."/>
            <person name="Tao Y."/>
            <person name="Biddle P."/>
            <person name="Jung M."/>
            <person name="Krespan W."/>
            <person name="Perry M."/>
            <person name="Gordon-Kamm B."/>
            <person name="Liao L."/>
            <person name="Kim S."/>
            <person name="Hendrick C."/>
            <person name="Zhao Z.-Y."/>
            <person name="Dolan M."/>
            <person name="Chumley F."/>
            <person name="Tingey S.V."/>
            <person name="Tomb J.-F."/>
            <person name="Gordon M.P."/>
            <person name="Olson M.V."/>
            <person name="Nester E.W."/>
        </authorList>
    </citation>
    <scope>NUCLEOTIDE SEQUENCE [LARGE SCALE GENOMIC DNA]</scope>
    <source>
        <strain>C58 / ATCC 33970</strain>
    </source>
</reference>
<reference key="2">
    <citation type="journal article" date="2001" name="Science">
        <title>Genome sequence of the plant pathogen and biotechnology agent Agrobacterium tumefaciens C58.</title>
        <authorList>
            <person name="Goodner B."/>
            <person name="Hinkle G."/>
            <person name="Gattung S."/>
            <person name="Miller N."/>
            <person name="Blanchard M."/>
            <person name="Qurollo B."/>
            <person name="Goldman B.S."/>
            <person name="Cao Y."/>
            <person name="Askenazi M."/>
            <person name="Halling C."/>
            <person name="Mullin L."/>
            <person name="Houmiel K."/>
            <person name="Gordon J."/>
            <person name="Vaudin M."/>
            <person name="Iartchouk O."/>
            <person name="Epp A."/>
            <person name="Liu F."/>
            <person name="Wollam C."/>
            <person name="Allinger M."/>
            <person name="Doughty D."/>
            <person name="Scott C."/>
            <person name="Lappas C."/>
            <person name="Markelz B."/>
            <person name="Flanagan C."/>
            <person name="Crowell C."/>
            <person name="Gurson J."/>
            <person name="Lomo C."/>
            <person name="Sear C."/>
            <person name="Strub G."/>
            <person name="Cielo C."/>
            <person name="Slater S."/>
        </authorList>
    </citation>
    <scope>NUCLEOTIDE SEQUENCE [LARGE SCALE GENOMIC DNA]</scope>
    <source>
        <strain>C58 / ATCC 33970</strain>
    </source>
</reference>
<feature type="chain" id="PRO_0000082905" description="Methionyl-tRNA formyltransferase">
    <location>
        <begin position="1"/>
        <end position="311"/>
    </location>
</feature>
<feature type="binding site" evidence="1">
    <location>
        <begin position="112"/>
        <end position="115"/>
    </location>
    <ligand>
        <name>(6S)-5,6,7,8-tetrahydrofolate</name>
        <dbReference type="ChEBI" id="CHEBI:57453"/>
    </ligand>
</feature>
<comment type="function">
    <text evidence="1">Attaches a formyl group to the free amino group of methionyl-tRNA(fMet). The formyl group appears to play a dual role in the initiator identity of N-formylmethionyl-tRNA by promoting its recognition by IF2 and preventing the misappropriation of this tRNA by the elongation apparatus.</text>
</comment>
<comment type="catalytic activity">
    <reaction evidence="1">
        <text>L-methionyl-tRNA(fMet) + (6R)-10-formyltetrahydrofolate = N-formyl-L-methionyl-tRNA(fMet) + (6S)-5,6,7,8-tetrahydrofolate + H(+)</text>
        <dbReference type="Rhea" id="RHEA:24380"/>
        <dbReference type="Rhea" id="RHEA-COMP:9952"/>
        <dbReference type="Rhea" id="RHEA-COMP:9953"/>
        <dbReference type="ChEBI" id="CHEBI:15378"/>
        <dbReference type="ChEBI" id="CHEBI:57453"/>
        <dbReference type="ChEBI" id="CHEBI:78530"/>
        <dbReference type="ChEBI" id="CHEBI:78844"/>
        <dbReference type="ChEBI" id="CHEBI:195366"/>
        <dbReference type="EC" id="2.1.2.9"/>
    </reaction>
</comment>
<comment type="similarity">
    <text evidence="1">Belongs to the Fmt family.</text>
</comment>
<gene>
    <name evidence="1" type="primary">fmt</name>
    <name type="ordered locus">Atu0367</name>
    <name type="ORF">AGR_C_642</name>
</gene>